<feature type="chain" id="PRO_0000388894" description="UPF0756 membrane protein lhv_0995">
    <location>
        <begin position="1"/>
        <end position="151"/>
    </location>
</feature>
<feature type="transmembrane region" description="Helical" evidence="1">
    <location>
        <begin position="4"/>
        <end position="24"/>
    </location>
</feature>
<feature type="transmembrane region" description="Helical" evidence="1">
    <location>
        <begin position="25"/>
        <end position="45"/>
    </location>
</feature>
<feature type="transmembrane region" description="Helical" evidence="1">
    <location>
        <begin position="52"/>
        <end position="72"/>
    </location>
</feature>
<feature type="transmembrane region" description="Helical" evidence="1">
    <location>
        <begin position="78"/>
        <end position="98"/>
    </location>
</feature>
<feature type="transmembrane region" description="Helical" evidence="1">
    <location>
        <begin position="115"/>
        <end position="135"/>
    </location>
</feature>
<name>Y995_LACH4</name>
<dbReference type="EMBL" id="CP000517">
    <property type="protein sequence ID" value="ABX27074.1"/>
    <property type="molecule type" value="Genomic_DNA"/>
</dbReference>
<dbReference type="RefSeq" id="WP_003628182.1">
    <property type="nucleotide sequence ID" value="NC_010080.1"/>
</dbReference>
<dbReference type="SMR" id="A8YUY6"/>
<dbReference type="KEGG" id="lhe:lhv_0995"/>
<dbReference type="eggNOG" id="COG2707">
    <property type="taxonomic scope" value="Bacteria"/>
</dbReference>
<dbReference type="HOGENOM" id="CLU_125889_1_0_9"/>
<dbReference type="Proteomes" id="UP000000790">
    <property type="component" value="Chromosome"/>
</dbReference>
<dbReference type="GO" id="GO:0005886">
    <property type="term" value="C:plasma membrane"/>
    <property type="evidence" value="ECO:0007669"/>
    <property type="project" value="UniProtKB-SubCell"/>
</dbReference>
<dbReference type="HAMAP" id="MF_01874">
    <property type="entry name" value="UPF0756"/>
    <property type="match status" value="1"/>
</dbReference>
<dbReference type="InterPro" id="IPR007382">
    <property type="entry name" value="UPF0756_TM"/>
</dbReference>
<dbReference type="PANTHER" id="PTHR38452">
    <property type="entry name" value="UPF0756 MEMBRANE PROTEIN YEAL"/>
    <property type="match status" value="1"/>
</dbReference>
<dbReference type="PANTHER" id="PTHR38452:SF1">
    <property type="entry name" value="UPF0756 MEMBRANE PROTEIN YEAL"/>
    <property type="match status" value="1"/>
</dbReference>
<dbReference type="Pfam" id="PF04284">
    <property type="entry name" value="DUF441"/>
    <property type="match status" value="1"/>
</dbReference>
<accession>A8YUY6</accession>
<comment type="subcellular location">
    <subcellularLocation>
        <location evidence="1">Cell membrane</location>
        <topology evidence="1">Multi-pass membrane protein</topology>
    </subcellularLocation>
</comment>
<comment type="similarity">
    <text evidence="1">Belongs to the UPF0756 family.</text>
</comment>
<sequence>MESWLFLALVLVVALVGKNMSLIIATGVVMALKLIPFASKWLPVIQAKGINWGVTVISVAILIPVATGQIGFKDLINTFKSPAGWIAILAGIAVAILSRYGVDQLAAVPQVTVALVLGTIIGVVVFKGVAAGPVIASGMTYLVITLFNLHF</sequence>
<keyword id="KW-1003">Cell membrane</keyword>
<keyword id="KW-0472">Membrane</keyword>
<keyword id="KW-0812">Transmembrane</keyword>
<keyword id="KW-1133">Transmembrane helix</keyword>
<proteinExistence type="inferred from homology"/>
<evidence type="ECO:0000255" key="1">
    <source>
        <dbReference type="HAMAP-Rule" id="MF_01874"/>
    </source>
</evidence>
<reference key="1">
    <citation type="journal article" date="2008" name="J. Bacteriol.">
        <title>Genome sequence of Lactobacillus helveticus: an organism distinguished by selective gene loss and IS element expansion.</title>
        <authorList>
            <person name="Callanan M."/>
            <person name="Kaleta P."/>
            <person name="O'Callaghan J."/>
            <person name="O'Sullivan O."/>
            <person name="Jordan K."/>
            <person name="McAuliffe O."/>
            <person name="Sangrador-Vegas A."/>
            <person name="Slattery L."/>
            <person name="Fitzgerald G.F."/>
            <person name="Beresford T."/>
            <person name="Ross R.P."/>
        </authorList>
    </citation>
    <scope>NUCLEOTIDE SEQUENCE [LARGE SCALE GENOMIC DNA]</scope>
    <source>
        <strain>DPC 4571</strain>
    </source>
</reference>
<organism>
    <name type="scientific">Lactobacillus helveticus (strain DPC 4571)</name>
    <dbReference type="NCBI Taxonomy" id="405566"/>
    <lineage>
        <taxon>Bacteria</taxon>
        <taxon>Bacillati</taxon>
        <taxon>Bacillota</taxon>
        <taxon>Bacilli</taxon>
        <taxon>Lactobacillales</taxon>
        <taxon>Lactobacillaceae</taxon>
        <taxon>Lactobacillus</taxon>
    </lineage>
</organism>
<gene>
    <name type="ordered locus">lhv_0995</name>
</gene>
<protein>
    <recommendedName>
        <fullName evidence="1">UPF0756 membrane protein lhv_0995</fullName>
    </recommendedName>
</protein>